<keyword id="KW-0067">ATP-binding</keyword>
<keyword id="KW-0963">Cytoplasm</keyword>
<keyword id="KW-0547">Nucleotide-binding</keyword>
<keyword id="KW-1185">Reference proteome</keyword>
<keyword id="KW-0694">RNA-binding</keyword>
<keyword id="KW-0784">Thiamine biosynthesis</keyword>
<keyword id="KW-0808">Transferase</keyword>
<keyword id="KW-0820">tRNA-binding</keyword>
<accession>B9DU51</accession>
<name>THII_STRU0</name>
<sequence>MQYSEIMVRHGELSTKGKNRMRFINKLKRNIQEVLSPFPNIKVRSDRDRTHVFLNGTPYEPVAEALKNVFGIQAFNPVYKLEKNVDLLIASVQEIMKDLYVDGMTFKISSKRSDHHFELDSRDLNLVLGNAVFDVLPNIKAQMKKPDVNLKVEIRDEAAYISHEEIKGAGGLPVGTSGKGMLMLSGGIDSPVAGYLALKRGVEIEAVHFASPPYTSPGALKKAQDLTRKLTKFGGNIQFIEVPFTEIQEEIKDKAPEAYLMTLTRRFMMRITDAIRASRSGLVIVNGESLGQVASQTLESMQAINAVTATPVIRPVVTMDKLEIIELAEKIDTFSISIQPFEDCCTIFAPDRPKTNPKLKNVEEYEKRFDIDGLVQRAVKGIKITEIKPEAEADDVDLMLDALL</sequence>
<comment type="function">
    <text evidence="1">Catalyzes the ATP-dependent transfer of a sulfur to tRNA to produce 4-thiouridine in position 8 of tRNAs, which functions as a near-UV photosensor. Also catalyzes the transfer of sulfur to the sulfur carrier protein ThiS, forming ThiS-thiocarboxylate. This is a step in the synthesis of thiazole, in the thiamine biosynthesis pathway. The sulfur is donated as persulfide by IscS.</text>
</comment>
<comment type="catalytic activity">
    <reaction evidence="1">
        <text>[ThiI sulfur-carrier protein]-S-sulfanyl-L-cysteine + a uridine in tRNA + 2 reduced [2Fe-2S]-[ferredoxin] + ATP + H(+) = [ThiI sulfur-carrier protein]-L-cysteine + a 4-thiouridine in tRNA + 2 oxidized [2Fe-2S]-[ferredoxin] + AMP + diphosphate</text>
        <dbReference type="Rhea" id="RHEA:24176"/>
        <dbReference type="Rhea" id="RHEA-COMP:10000"/>
        <dbReference type="Rhea" id="RHEA-COMP:10001"/>
        <dbReference type="Rhea" id="RHEA-COMP:13337"/>
        <dbReference type="Rhea" id="RHEA-COMP:13338"/>
        <dbReference type="Rhea" id="RHEA-COMP:13339"/>
        <dbReference type="Rhea" id="RHEA-COMP:13340"/>
        <dbReference type="ChEBI" id="CHEBI:15378"/>
        <dbReference type="ChEBI" id="CHEBI:29950"/>
        <dbReference type="ChEBI" id="CHEBI:30616"/>
        <dbReference type="ChEBI" id="CHEBI:33019"/>
        <dbReference type="ChEBI" id="CHEBI:33737"/>
        <dbReference type="ChEBI" id="CHEBI:33738"/>
        <dbReference type="ChEBI" id="CHEBI:61963"/>
        <dbReference type="ChEBI" id="CHEBI:65315"/>
        <dbReference type="ChEBI" id="CHEBI:136798"/>
        <dbReference type="ChEBI" id="CHEBI:456215"/>
        <dbReference type="EC" id="2.8.1.4"/>
    </reaction>
</comment>
<comment type="catalytic activity">
    <reaction evidence="1">
        <text>[ThiS sulfur-carrier protein]-C-terminal Gly-Gly-AMP + S-sulfanyl-L-cysteinyl-[cysteine desulfurase] + AH2 = [ThiS sulfur-carrier protein]-C-terminal-Gly-aminoethanethioate + L-cysteinyl-[cysteine desulfurase] + A + AMP + 2 H(+)</text>
        <dbReference type="Rhea" id="RHEA:43340"/>
        <dbReference type="Rhea" id="RHEA-COMP:12157"/>
        <dbReference type="Rhea" id="RHEA-COMP:12158"/>
        <dbReference type="Rhea" id="RHEA-COMP:12910"/>
        <dbReference type="Rhea" id="RHEA-COMP:19908"/>
        <dbReference type="ChEBI" id="CHEBI:13193"/>
        <dbReference type="ChEBI" id="CHEBI:15378"/>
        <dbReference type="ChEBI" id="CHEBI:17499"/>
        <dbReference type="ChEBI" id="CHEBI:29950"/>
        <dbReference type="ChEBI" id="CHEBI:61963"/>
        <dbReference type="ChEBI" id="CHEBI:90618"/>
        <dbReference type="ChEBI" id="CHEBI:232372"/>
        <dbReference type="ChEBI" id="CHEBI:456215"/>
    </reaction>
</comment>
<comment type="pathway">
    <text evidence="1">Cofactor biosynthesis; thiamine diphosphate biosynthesis.</text>
</comment>
<comment type="subcellular location">
    <subcellularLocation>
        <location evidence="1">Cytoplasm</location>
    </subcellularLocation>
</comment>
<comment type="similarity">
    <text evidence="1">Belongs to the ThiI family.</text>
</comment>
<protein>
    <recommendedName>
        <fullName evidence="1">Probable tRNA sulfurtransferase</fullName>
        <ecNumber evidence="1">2.8.1.4</ecNumber>
    </recommendedName>
    <alternativeName>
        <fullName evidence="1">Sulfur carrier protein ThiS sulfurtransferase</fullName>
    </alternativeName>
    <alternativeName>
        <fullName evidence="1">Thiamine biosynthesis protein ThiI</fullName>
    </alternativeName>
    <alternativeName>
        <fullName evidence="1">tRNA 4-thiouridine synthase</fullName>
    </alternativeName>
</protein>
<proteinExistence type="inferred from homology"/>
<dbReference type="EC" id="2.8.1.4" evidence="1"/>
<dbReference type="EMBL" id="AM946015">
    <property type="protein sequence ID" value="CAR41642.1"/>
    <property type="molecule type" value="Genomic_DNA"/>
</dbReference>
<dbReference type="RefSeq" id="WP_012658239.1">
    <property type="nucleotide sequence ID" value="NC_012004.1"/>
</dbReference>
<dbReference type="SMR" id="B9DU51"/>
<dbReference type="STRING" id="218495.SUB0722"/>
<dbReference type="KEGG" id="sub:SUB0722"/>
<dbReference type="eggNOG" id="COG0301">
    <property type="taxonomic scope" value="Bacteria"/>
</dbReference>
<dbReference type="HOGENOM" id="CLU_037952_4_0_9"/>
<dbReference type="OrthoDB" id="9773948at2"/>
<dbReference type="UniPathway" id="UPA00060"/>
<dbReference type="Proteomes" id="UP000000449">
    <property type="component" value="Chromosome"/>
</dbReference>
<dbReference type="GO" id="GO:0005829">
    <property type="term" value="C:cytosol"/>
    <property type="evidence" value="ECO:0007669"/>
    <property type="project" value="TreeGrafter"/>
</dbReference>
<dbReference type="GO" id="GO:0005524">
    <property type="term" value="F:ATP binding"/>
    <property type="evidence" value="ECO:0007669"/>
    <property type="project" value="UniProtKB-UniRule"/>
</dbReference>
<dbReference type="GO" id="GO:0004810">
    <property type="term" value="F:CCA tRNA nucleotidyltransferase activity"/>
    <property type="evidence" value="ECO:0007669"/>
    <property type="project" value="InterPro"/>
</dbReference>
<dbReference type="GO" id="GO:0000049">
    <property type="term" value="F:tRNA binding"/>
    <property type="evidence" value="ECO:0007669"/>
    <property type="project" value="UniProtKB-UniRule"/>
</dbReference>
<dbReference type="GO" id="GO:0140741">
    <property type="term" value="F:tRNA-uracil-4 sulfurtransferase activity"/>
    <property type="evidence" value="ECO:0007669"/>
    <property type="project" value="UniProtKB-EC"/>
</dbReference>
<dbReference type="GO" id="GO:0009228">
    <property type="term" value="P:thiamine biosynthetic process"/>
    <property type="evidence" value="ECO:0007669"/>
    <property type="project" value="UniProtKB-KW"/>
</dbReference>
<dbReference type="GO" id="GO:0009229">
    <property type="term" value="P:thiamine diphosphate biosynthetic process"/>
    <property type="evidence" value="ECO:0007669"/>
    <property type="project" value="UniProtKB-UniRule"/>
</dbReference>
<dbReference type="GO" id="GO:0052837">
    <property type="term" value="P:thiazole biosynthetic process"/>
    <property type="evidence" value="ECO:0007669"/>
    <property type="project" value="TreeGrafter"/>
</dbReference>
<dbReference type="GO" id="GO:0002937">
    <property type="term" value="P:tRNA 4-thiouridine biosynthesis"/>
    <property type="evidence" value="ECO:0007669"/>
    <property type="project" value="TreeGrafter"/>
</dbReference>
<dbReference type="CDD" id="cd01712">
    <property type="entry name" value="PPase_ThiI"/>
    <property type="match status" value="1"/>
</dbReference>
<dbReference type="CDD" id="cd11716">
    <property type="entry name" value="THUMP_ThiI"/>
    <property type="match status" value="1"/>
</dbReference>
<dbReference type="FunFam" id="3.40.50.620:FF:000053">
    <property type="entry name" value="Probable tRNA sulfurtransferase"/>
    <property type="match status" value="1"/>
</dbReference>
<dbReference type="Gene3D" id="3.30.2130.30">
    <property type="match status" value="1"/>
</dbReference>
<dbReference type="Gene3D" id="3.40.50.620">
    <property type="entry name" value="HUPs"/>
    <property type="match status" value="1"/>
</dbReference>
<dbReference type="HAMAP" id="MF_00021">
    <property type="entry name" value="ThiI"/>
    <property type="match status" value="1"/>
</dbReference>
<dbReference type="InterPro" id="IPR014729">
    <property type="entry name" value="Rossmann-like_a/b/a_fold"/>
</dbReference>
<dbReference type="InterPro" id="IPR020536">
    <property type="entry name" value="ThiI_AANH"/>
</dbReference>
<dbReference type="InterPro" id="IPR054173">
    <property type="entry name" value="ThiI_fer"/>
</dbReference>
<dbReference type="InterPro" id="IPR049961">
    <property type="entry name" value="ThiI_N"/>
</dbReference>
<dbReference type="InterPro" id="IPR004114">
    <property type="entry name" value="THUMP_dom"/>
</dbReference>
<dbReference type="InterPro" id="IPR049962">
    <property type="entry name" value="THUMP_ThiI"/>
</dbReference>
<dbReference type="InterPro" id="IPR003720">
    <property type="entry name" value="tRNA_STrfase"/>
</dbReference>
<dbReference type="InterPro" id="IPR050102">
    <property type="entry name" value="tRNA_sulfurtransferase_ThiI"/>
</dbReference>
<dbReference type="NCBIfam" id="TIGR00342">
    <property type="entry name" value="tRNA uracil 4-sulfurtransferase ThiI"/>
    <property type="match status" value="1"/>
</dbReference>
<dbReference type="PANTHER" id="PTHR43209">
    <property type="entry name" value="TRNA SULFURTRANSFERASE"/>
    <property type="match status" value="1"/>
</dbReference>
<dbReference type="PANTHER" id="PTHR43209:SF1">
    <property type="entry name" value="TRNA SULFURTRANSFERASE"/>
    <property type="match status" value="1"/>
</dbReference>
<dbReference type="Pfam" id="PF02568">
    <property type="entry name" value="ThiI"/>
    <property type="match status" value="1"/>
</dbReference>
<dbReference type="Pfam" id="PF22025">
    <property type="entry name" value="ThiI_fer"/>
    <property type="match status" value="1"/>
</dbReference>
<dbReference type="Pfam" id="PF02926">
    <property type="entry name" value="THUMP"/>
    <property type="match status" value="1"/>
</dbReference>
<dbReference type="SMART" id="SM00981">
    <property type="entry name" value="THUMP"/>
    <property type="match status" value="1"/>
</dbReference>
<dbReference type="SUPFAM" id="SSF52402">
    <property type="entry name" value="Adenine nucleotide alpha hydrolases-like"/>
    <property type="match status" value="1"/>
</dbReference>
<dbReference type="SUPFAM" id="SSF143437">
    <property type="entry name" value="THUMP domain-like"/>
    <property type="match status" value="1"/>
</dbReference>
<dbReference type="PROSITE" id="PS51165">
    <property type="entry name" value="THUMP"/>
    <property type="match status" value="1"/>
</dbReference>
<feature type="chain" id="PRO_1000196938" description="Probable tRNA sulfurtransferase">
    <location>
        <begin position="1"/>
        <end position="404"/>
    </location>
</feature>
<feature type="domain" description="THUMP" evidence="1">
    <location>
        <begin position="60"/>
        <end position="165"/>
    </location>
</feature>
<feature type="binding site" evidence="1">
    <location>
        <begin position="183"/>
        <end position="184"/>
    </location>
    <ligand>
        <name>ATP</name>
        <dbReference type="ChEBI" id="CHEBI:30616"/>
    </ligand>
</feature>
<feature type="binding site" evidence="1">
    <location>
        <begin position="208"/>
        <end position="209"/>
    </location>
    <ligand>
        <name>ATP</name>
        <dbReference type="ChEBI" id="CHEBI:30616"/>
    </ligand>
</feature>
<feature type="binding site" evidence="1">
    <location>
        <position position="265"/>
    </location>
    <ligand>
        <name>ATP</name>
        <dbReference type="ChEBI" id="CHEBI:30616"/>
    </ligand>
</feature>
<feature type="binding site" evidence="1">
    <location>
        <position position="287"/>
    </location>
    <ligand>
        <name>ATP</name>
        <dbReference type="ChEBI" id="CHEBI:30616"/>
    </ligand>
</feature>
<feature type="binding site" evidence="1">
    <location>
        <position position="296"/>
    </location>
    <ligand>
        <name>ATP</name>
        <dbReference type="ChEBI" id="CHEBI:30616"/>
    </ligand>
</feature>
<evidence type="ECO:0000255" key="1">
    <source>
        <dbReference type="HAMAP-Rule" id="MF_00021"/>
    </source>
</evidence>
<organism>
    <name type="scientific">Streptococcus uberis (strain ATCC BAA-854 / 0140J)</name>
    <dbReference type="NCBI Taxonomy" id="218495"/>
    <lineage>
        <taxon>Bacteria</taxon>
        <taxon>Bacillati</taxon>
        <taxon>Bacillota</taxon>
        <taxon>Bacilli</taxon>
        <taxon>Lactobacillales</taxon>
        <taxon>Streptococcaceae</taxon>
        <taxon>Streptococcus</taxon>
    </lineage>
</organism>
<gene>
    <name evidence="1" type="primary">thiI</name>
    <name type="ordered locus">SUB0722</name>
</gene>
<reference key="1">
    <citation type="journal article" date="2009" name="BMC Genomics">
        <title>Evidence for niche adaptation in the genome of the bovine pathogen Streptococcus uberis.</title>
        <authorList>
            <person name="Ward P.N."/>
            <person name="Holden M.T.G."/>
            <person name="Leigh J.A."/>
            <person name="Lennard N."/>
            <person name="Bignell A."/>
            <person name="Barron A."/>
            <person name="Clark L."/>
            <person name="Quail M.A."/>
            <person name="Woodward J."/>
            <person name="Barrell B.G."/>
            <person name="Egan S.A."/>
            <person name="Field T.R."/>
            <person name="Maskell D."/>
            <person name="Kehoe M."/>
            <person name="Dowson C.G."/>
            <person name="Chanter N."/>
            <person name="Whatmore A.M."/>
            <person name="Bentley S.D."/>
            <person name="Parkhill J."/>
        </authorList>
    </citation>
    <scope>NUCLEOTIDE SEQUENCE [LARGE SCALE GENOMIC DNA]</scope>
    <source>
        <strain>ATCC BAA-854 / 0140J</strain>
    </source>
</reference>